<name>PSA3_DROME</name>
<dbReference type="EMBL" id="AF025793">
    <property type="protein sequence ID" value="AAB82572.1"/>
    <property type="molecule type" value="Genomic_DNA"/>
</dbReference>
<dbReference type="EMBL" id="AE013599">
    <property type="protein sequence ID" value="AAF58889.1"/>
    <property type="molecule type" value="Genomic_DNA"/>
</dbReference>
<dbReference type="EMBL" id="AY069616">
    <property type="protein sequence ID" value="AAL39761.1"/>
    <property type="molecule type" value="mRNA"/>
</dbReference>
<dbReference type="EMBL" id="BT014669">
    <property type="protein sequence ID" value="AAT27293.1"/>
    <property type="molecule type" value="mRNA"/>
</dbReference>
<dbReference type="RefSeq" id="NP_724834.1">
    <property type="nucleotide sequence ID" value="NM_165703.3"/>
</dbReference>
<dbReference type="SMR" id="Q9V5C6"/>
<dbReference type="BioGRID" id="61847">
    <property type="interactions" value="57"/>
</dbReference>
<dbReference type="ComplexPortal" id="CPX-9070">
    <property type="entry name" value="26S proteasome complex"/>
</dbReference>
<dbReference type="ComplexPortal" id="CPX-9087">
    <property type="entry name" value="26S proteasome complex, testis-specific variant"/>
</dbReference>
<dbReference type="DIP" id="DIP-22157N"/>
<dbReference type="FunCoup" id="Q9V5C6">
    <property type="interactions" value="2049"/>
</dbReference>
<dbReference type="IntAct" id="Q9V5C6">
    <property type="interactions" value="165"/>
</dbReference>
<dbReference type="STRING" id="7227.FBpp0089041"/>
<dbReference type="iPTMnet" id="Q9V5C6"/>
<dbReference type="PaxDb" id="7227-FBpp0089041"/>
<dbReference type="DNASU" id="36018"/>
<dbReference type="EnsemblMetazoa" id="FBtr0089998">
    <property type="protein sequence ID" value="FBpp0089041"/>
    <property type="gene ID" value="FBgn0023175"/>
</dbReference>
<dbReference type="GeneID" id="36018"/>
<dbReference type="KEGG" id="dme:Dmel_CG1519"/>
<dbReference type="AGR" id="FB:FBgn0023175"/>
<dbReference type="CTD" id="36018"/>
<dbReference type="FlyBase" id="FBgn0023175">
    <property type="gene designation" value="Prosalpha7"/>
</dbReference>
<dbReference type="VEuPathDB" id="VectorBase:FBgn0023175"/>
<dbReference type="eggNOG" id="KOG0184">
    <property type="taxonomic scope" value="Eukaryota"/>
</dbReference>
<dbReference type="GeneTree" id="ENSGT00550000074912"/>
<dbReference type="HOGENOM" id="CLU_035750_0_0_1"/>
<dbReference type="InParanoid" id="Q9V5C6"/>
<dbReference type="OMA" id="RVSMYMH"/>
<dbReference type="OrthoDB" id="40134at2759"/>
<dbReference type="PhylomeDB" id="Q9V5C6"/>
<dbReference type="Reactome" id="R-DME-1169091">
    <property type="pathway name" value="Activation of NF-kappaB in B cells"/>
</dbReference>
<dbReference type="Reactome" id="R-DME-1234176">
    <property type="pathway name" value="Oxygen-dependent proline hydroxylation of Hypoxia-inducible Factor Alpha"/>
</dbReference>
<dbReference type="Reactome" id="R-DME-1236978">
    <property type="pathway name" value="Cross-presentation of soluble exogenous antigens (endosomes)"/>
</dbReference>
<dbReference type="Reactome" id="R-DME-174084">
    <property type="pathway name" value="Autodegradation of Cdh1 by Cdh1:APC/C"/>
</dbReference>
<dbReference type="Reactome" id="R-DME-174154">
    <property type="pathway name" value="APC/C:Cdc20 mediated degradation of Securin"/>
</dbReference>
<dbReference type="Reactome" id="R-DME-174178">
    <property type="pathway name" value="APC/C:Cdh1 mediated degradation of Cdc20 and other APC/C:Cdh1 targeted proteins in late mitosis/early G1"/>
</dbReference>
<dbReference type="Reactome" id="R-DME-174184">
    <property type="pathway name" value="Cdc20:Phospho-APC/C mediated degradation of Cyclin A"/>
</dbReference>
<dbReference type="Reactome" id="R-DME-187577">
    <property type="pathway name" value="SCF(Skp2)-mediated degradation of p27/p21"/>
</dbReference>
<dbReference type="Reactome" id="R-DME-195253">
    <property type="pathway name" value="Degradation of beta-catenin by the destruction complex"/>
</dbReference>
<dbReference type="Reactome" id="R-DME-202424">
    <property type="pathway name" value="Downstream TCR signaling"/>
</dbReference>
<dbReference type="Reactome" id="R-DME-209360">
    <property type="pathway name" value="Ubiquitination and proteolysis of phosphorylated CI"/>
</dbReference>
<dbReference type="Reactome" id="R-DME-209406">
    <property type="pathway name" value="Degradation of NF-kappa-B inhibitor, CACT"/>
</dbReference>
<dbReference type="Reactome" id="R-DME-209461">
    <property type="pathway name" value="Ubiquitination and degradation of phosphorylated ARM"/>
</dbReference>
<dbReference type="Reactome" id="R-DME-216167">
    <property type="pathway name" value="Nuclear CI is degraded"/>
</dbReference>
<dbReference type="Reactome" id="R-DME-2467813">
    <property type="pathway name" value="Separation of Sister Chromatids"/>
</dbReference>
<dbReference type="Reactome" id="R-DME-2871837">
    <property type="pathway name" value="FCERI mediated NF-kB activation"/>
</dbReference>
<dbReference type="Reactome" id="R-DME-350562">
    <property type="pathway name" value="Regulation of ornithine decarboxylase (ODC)"/>
</dbReference>
<dbReference type="Reactome" id="R-DME-382556">
    <property type="pathway name" value="ABC-family proteins mediated transport"/>
</dbReference>
<dbReference type="Reactome" id="R-DME-432395">
    <property type="pathway name" value="Degradation of TIM"/>
</dbReference>
<dbReference type="Reactome" id="R-DME-432524">
    <property type="pathway name" value="Degradation of PER"/>
</dbReference>
<dbReference type="Reactome" id="R-DME-432626">
    <property type="pathway name" value="Circadian Clock pathway"/>
</dbReference>
<dbReference type="Reactome" id="R-DME-450408">
    <property type="pathway name" value="AUF1 (hnRNP D0) binds and destabilizes mRNA"/>
</dbReference>
<dbReference type="Reactome" id="R-DME-4608870">
    <property type="pathway name" value="Asymmetric localization of PCP proteins"/>
</dbReference>
<dbReference type="Reactome" id="R-DME-4641257">
    <property type="pathway name" value="Degradation of AXIN"/>
</dbReference>
<dbReference type="Reactome" id="R-DME-4641258">
    <property type="pathway name" value="Degradation of DVL"/>
</dbReference>
<dbReference type="Reactome" id="R-DME-5358346">
    <property type="pathway name" value="Hedgehog ligand biogenesis"/>
</dbReference>
<dbReference type="Reactome" id="R-DME-538864">
    <property type="pathway name" value="Degradation of CRY"/>
</dbReference>
<dbReference type="Reactome" id="R-DME-5607761">
    <property type="pathway name" value="Dectin-1 mediated noncanonical NF-kB signaling"/>
</dbReference>
<dbReference type="Reactome" id="R-DME-5607764">
    <property type="pathway name" value="CLEC7A (Dectin-1) signaling"/>
</dbReference>
<dbReference type="Reactome" id="R-DME-5610780">
    <property type="pathway name" value="Degradation of GLI1 by the proteasome"/>
</dbReference>
<dbReference type="Reactome" id="R-DME-5610785">
    <property type="pathway name" value="GLI3 is processed to GLI3R by the proteasome"/>
</dbReference>
<dbReference type="Reactome" id="R-DME-5632684">
    <property type="pathway name" value="Hedgehog 'on' state"/>
</dbReference>
<dbReference type="Reactome" id="R-DME-5658442">
    <property type="pathway name" value="Regulation of RAS by GAPs"/>
</dbReference>
<dbReference type="Reactome" id="R-DME-5676590">
    <property type="pathway name" value="NIK--&gt;noncanonical NF-kB signaling"/>
</dbReference>
<dbReference type="Reactome" id="R-DME-5689603">
    <property type="pathway name" value="UCH proteinases"/>
</dbReference>
<dbReference type="Reactome" id="R-DME-5689880">
    <property type="pathway name" value="Ub-specific processing proteases"/>
</dbReference>
<dbReference type="Reactome" id="R-DME-68949">
    <property type="pathway name" value="Orc1 removal from chromatin"/>
</dbReference>
<dbReference type="Reactome" id="R-DME-69017">
    <property type="pathway name" value="CDK-mediated phosphorylation and removal of Cdc6"/>
</dbReference>
<dbReference type="Reactome" id="R-DME-69601">
    <property type="pathway name" value="Ubiquitin Mediated Degradation of Phosphorylated Cdc25A"/>
</dbReference>
<dbReference type="Reactome" id="R-DME-75815">
    <property type="pathway name" value="Ubiquitin-dependent degradation of Cyclin D"/>
</dbReference>
<dbReference type="Reactome" id="R-DME-8854050">
    <property type="pathway name" value="FBXL7 down-regulates AURKA during mitotic entry and in early mitosis"/>
</dbReference>
<dbReference type="Reactome" id="R-DME-8939236">
    <property type="pathway name" value="RUNX1 regulates transcription of genes involved in differentiation of HSCs"/>
</dbReference>
<dbReference type="Reactome" id="R-DME-8939902">
    <property type="pathway name" value="Regulation of RUNX2 expression and activity"/>
</dbReference>
<dbReference type="Reactome" id="R-DME-8941858">
    <property type="pathway name" value="Regulation of RUNX3 expression and activity"/>
</dbReference>
<dbReference type="Reactome" id="R-DME-8948751">
    <property type="pathway name" value="Regulation of PTEN stability and activity"/>
</dbReference>
<dbReference type="Reactome" id="R-DME-8951664">
    <property type="pathway name" value="Neddylation"/>
</dbReference>
<dbReference type="Reactome" id="R-DME-9020702">
    <property type="pathway name" value="Interleukin-1 signaling"/>
</dbReference>
<dbReference type="Reactome" id="R-DME-9755511">
    <property type="pathway name" value="KEAP1-NFE2L2 pathway"/>
</dbReference>
<dbReference type="Reactome" id="R-DME-9762114">
    <property type="pathway name" value="GSK3B and BTRC:CUL1-mediated-degradation of NFE2L2"/>
</dbReference>
<dbReference type="Reactome" id="R-DME-983168">
    <property type="pathway name" value="Antigen processing: Ubiquitination &amp; Proteasome degradation"/>
</dbReference>
<dbReference type="Reactome" id="R-DME-9907900">
    <property type="pathway name" value="Proteasome assembly"/>
</dbReference>
<dbReference type="BioGRID-ORCS" id="36018">
    <property type="hits" value="1 hit in 1 CRISPR screen"/>
</dbReference>
<dbReference type="GenomeRNAi" id="36018"/>
<dbReference type="PRO" id="PR:Q9V5C6"/>
<dbReference type="Proteomes" id="UP000000803">
    <property type="component" value="Chromosome 2R"/>
</dbReference>
<dbReference type="Bgee" id="FBgn0023175">
    <property type="expression patterns" value="Expressed in egg cell and 199 other cell types or tissues"/>
</dbReference>
<dbReference type="GO" id="GO:0005829">
    <property type="term" value="C:cytosol"/>
    <property type="evidence" value="ECO:0000304"/>
    <property type="project" value="Reactome"/>
</dbReference>
<dbReference type="GO" id="GO:0005654">
    <property type="term" value="C:nucleoplasm"/>
    <property type="evidence" value="ECO:0000304"/>
    <property type="project" value="Reactome"/>
</dbReference>
<dbReference type="GO" id="GO:0005634">
    <property type="term" value="C:nucleus"/>
    <property type="evidence" value="ECO:0000318"/>
    <property type="project" value="GO_Central"/>
</dbReference>
<dbReference type="GO" id="GO:0000502">
    <property type="term" value="C:proteasome complex"/>
    <property type="evidence" value="ECO:0000314"/>
    <property type="project" value="FlyBase"/>
</dbReference>
<dbReference type="GO" id="GO:0005839">
    <property type="term" value="C:proteasome core complex"/>
    <property type="evidence" value="ECO:0000314"/>
    <property type="project" value="FlyBase"/>
</dbReference>
<dbReference type="GO" id="GO:0019773">
    <property type="term" value="C:proteasome core complex, alpha-subunit complex"/>
    <property type="evidence" value="ECO:0000250"/>
    <property type="project" value="UniProtKB"/>
</dbReference>
<dbReference type="GO" id="GO:0030707">
    <property type="term" value="P:follicle cell of egg chamber development"/>
    <property type="evidence" value="ECO:0000315"/>
    <property type="project" value="FlyBase"/>
</dbReference>
<dbReference type="GO" id="GO:0043161">
    <property type="term" value="P:proteasome-mediated ubiquitin-dependent protein catabolic process"/>
    <property type="evidence" value="ECO:0000315"/>
    <property type="project" value="FlyBase"/>
</dbReference>
<dbReference type="CDD" id="cd03751">
    <property type="entry name" value="proteasome_alpha_type_3"/>
    <property type="match status" value="1"/>
</dbReference>
<dbReference type="FunFam" id="3.60.20.10:FF:000007">
    <property type="entry name" value="Proteasome subunit alpha type"/>
    <property type="match status" value="1"/>
</dbReference>
<dbReference type="Gene3D" id="3.60.20.10">
    <property type="entry name" value="Glutamine Phosphoribosylpyrophosphate, subunit 1, domain 1"/>
    <property type="match status" value="1"/>
</dbReference>
<dbReference type="InterPro" id="IPR029055">
    <property type="entry name" value="Ntn_hydrolases_N"/>
</dbReference>
<dbReference type="InterPro" id="IPR050115">
    <property type="entry name" value="Proteasome_alpha"/>
</dbReference>
<dbReference type="InterPro" id="IPR023332">
    <property type="entry name" value="Proteasome_alpha-type"/>
</dbReference>
<dbReference type="InterPro" id="IPR000426">
    <property type="entry name" value="Proteasome_asu_N"/>
</dbReference>
<dbReference type="InterPro" id="IPR001353">
    <property type="entry name" value="Proteasome_sua/b"/>
</dbReference>
<dbReference type="PANTHER" id="PTHR11599">
    <property type="entry name" value="PROTEASOME SUBUNIT ALPHA/BETA"/>
    <property type="match status" value="1"/>
</dbReference>
<dbReference type="Pfam" id="PF00227">
    <property type="entry name" value="Proteasome"/>
    <property type="match status" value="1"/>
</dbReference>
<dbReference type="Pfam" id="PF10584">
    <property type="entry name" value="Proteasome_A_N"/>
    <property type="match status" value="1"/>
</dbReference>
<dbReference type="SMART" id="SM00948">
    <property type="entry name" value="Proteasome_A_N"/>
    <property type="match status" value="1"/>
</dbReference>
<dbReference type="SUPFAM" id="SSF56235">
    <property type="entry name" value="N-terminal nucleophile aminohydrolases (Ntn hydrolases)"/>
    <property type="match status" value="1"/>
</dbReference>
<dbReference type="PROSITE" id="PS00388">
    <property type="entry name" value="PROTEASOME_ALPHA_1"/>
    <property type="match status" value="1"/>
</dbReference>
<dbReference type="PROSITE" id="PS51475">
    <property type="entry name" value="PROTEASOME_ALPHA_2"/>
    <property type="match status" value="1"/>
</dbReference>
<proteinExistence type="evidence at protein level"/>
<evidence type="ECO:0000250" key="1"/>
<evidence type="ECO:0000255" key="2">
    <source>
        <dbReference type="PROSITE-ProRule" id="PRU00808"/>
    </source>
</evidence>
<evidence type="ECO:0000256" key="3">
    <source>
        <dbReference type="SAM" id="MobiDB-lite"/>
    </source>
</evidence>
<evidence type="ECO:0000269" key="4">
    <source>
    </source>
</evidence>
<evidence type="ECO:0000269" key="5">
    <source>
    </source>
</evidence>
<evidence type="ECO:0000305" key="6"/>
<feature type="chain" id="PRO_0000124097" description="Proteasome subunit alpha type-3">
    <location>
        <begin position="1"/>
        <end position="253"/>
    </location>
</feature>
<feature type="region of interest" description="Disordered" evidence="3">
    <location>
        <begin position="230"/>
        <end position="253"/>
    </location>
</feature>
<feature type="compositionally biased region" description="Basic and acidic residues" evidence="3">
    <location>
        <begin position="231"/>
        <end position="253"/>
    </location>
</feature>
<feature type="modified residue" description="Phosphoserine" evidence="4">
    <location>
        <position position="248"/>
    </location>
</feature>
<feature type="sequence conflict" description="In Ref. 1; AAB82572." evidence="6" ref="1">
    <original>P</original>
    <variation>A</variation>
    <location>
        <position position="17"/>
    </location>
</feature>
<feature type="sequence conflict" description="In Ref. 1; AAB82572." evidence="6" ref="1">
    <location>
        <position position="30"/>
    </location>
</feature>
<feature type="sequence conflict" description="In Ref. 1; AAB82572." evidence="6" ref="1">
    <original>D</original>
    <variation>H</variation>
    <location>
        <position position="62"/>
    </location>
</feature>
<feature type="sequence conflict" description="In Ref. 5; AAT27293." evidence="6" ref="5">
    <location>
        <begin position="140"/>
        <end position="157"/>
    </location>
</feature>
<feature type="sequence conflict" description="In Ref. 1; AAB82572." evidence="6" ref="1">
    <location>
        <position position="167"/>
    </location>
</feature>
<feature type="sequence conflict" description="In Ref. 1; AAB82572." evidence="6" ref="1">
    <original>M</original>
    <variation>T</variation>
    <location>
        <position position="182"/>
    </location>
</feature>
<feature type="sequence conflict" description="In Ref. 1; AAB82572." evidence="6" ref="1">
    <original>ARKAGDAANKDEDSDNETH</original>
    <variation>DEDTACGQQDEGRRQRQ</variation>
    <location>
        <begin position="235"/>
        <end position="253"/>
    </location>
</feature>
<accession>Q9V5C6</accession>
<accession>O17313</accession>
<accession>Q8MKU6</accession>
<sequence>MSTIGTGYDLSASQFSPDGRVFQIDYASKAVEKSGTVIGIRGKDAVVLAVEKIITSKLYEPDAGGRIFTIEKNIGMAVAGLVADGNFVADIARQEAANYRQQFEQAIPLKHLCHRVAGYVHAYTLYSAVRPFGLSIILASWDEVEGPQLYKIEPSGSSFGYFACASGKAKQLAKTEMEKLKMDMRTDELVESAGEIIYKVHDELKDKDFRFEMGLVGRVTGGLHLINPSELTEKARKAGDAANKDEDSDNETH</sequence>
<gene>
    <name type="primary">Prosalpha7</name>
    <name type="ORF">CG1519</name>
</gene>
<organism>
    <name type="scientific">Drosophila melanogaster</name>
    <name type="common">Fruit fly</name>
    <dbReference type="NCBI Taxonomy" id="7227"/>
    <lineage>
        <taxon>Eukaryota</taxon>
        <taxon>Metazoa</taxon>
        <taxon>Ecdysozoa</taxon>
        <taxon>Arthropoda</taxon>
        <taxon>Hexapoda</taxon>
        <taxon>Insecta</taxon>
        <taxon>Pterygota</taxon>
        <taxon>Neoptera</taxon>
        <taxon>Endopterygota</taxon>
        <taxon>Diptera</taxon>
        <taxon>Brachycera</taxon>
        <taxon>Muscomorpha</taxon>
        <taxon>Ephydroidea</taxon>
        <taxon>Drosophilidae</taxon>
        <taxon>Drosophila</taxon>
        <taxon>Sophophora</taxon>
    </lineage>
</organism>
<protein>
    <recommendedName>
        <fullName>Proteasome subunit alpha type-3</fullName>
    </recommendedName>
    <alternativeName>
        <fullName>20S proteasome subunit alpha-7</fullName>
    </alternativeName>
</protein>
<comment type="function">
    <text evidence="1">The proteasome is a multicatalytic proteinase complex which is characterized by its ability to cleave peptides with Arg, Phe, Tyr, Leu, and Glu adjacent to the leaving group at neutral or slightly basic pH. The proteasome has an ATP-dependent proteolytic activity (By similarity).</text>
</comment>
<comment type="subunit">
    <text evidence="1 5">The 26S proteasome consists of a 20S proteasome core and two 19S regulatory subunits. The 20S proteasome core is composed of 28 subunits that are arranged in four stacked rings, resulting in a barrel-shaped structure. The two end rings are each formed by seven alpha subunits, and the two central rings are each formed by seven beta subunits. The catalytic chamber with the active sites is on the inside of the barrel (By similarity). Interacts with ntc.</text>
</comment>
<comment type="interaction">
    <interactant intactId="EBI-131307">
        <id>Q9V5C6</id>
    </interactant>
    <interactant intactId="EBI-166677">
        <id>Q9VK14</id>
        <label>Prosalpha6T</label>
    </interactant>
    <organismsDiffer>false</organismsDiffer>
    <experiments>3</experiments>
</comment>
<comment type="subcellular location">
    <subcellularLocation>
        <location evidence="1">Cytoplasm</location>
    </subcellularLocation>
    <subcellularLocation>
        <location evidence="1">Nucleus</location>
    </subcellularLocation>
</comment>
<comment type="similarity">
    <text evidence="2">Belongs to the peptidase T1A family.</text>
</comment>
<keyword id="KW-0963">Cytoplasm</keyword>
<keyword id="KW-0539">Nucleus</keyword>
<keyword id="KW-0597">Phosphoprotein</keyword>
<keyword id="KW-0647">Proteasome</keyword>
<keyword id="KW-1185">Reference proteome</keyword>
<reference key="1">
    <citation type="submission" date="1997-09" db="EMBL/GenBank/DDBJ databases">
        <title>Cloning of the Drosophila melanogaster alpha7 proteasome subunit gene.</title>
        <authorList>
            <person name="Belote J.M."/>
            <person name="Smyth K.A."/>
            <person name="Katz E."/>
            <person name="Miller M."/>
        </authorList>
    </citation>
    <scope>NUCLEOTIDE SEQUENCE [GENOMIC DNA]</scope>
</reference>
<reference key="2">
    <citation type="journal article" date="2000" name="Science">
        <title>The genome sequence of Drosophila melanogaster.</title>
        <authorList>
            <person name="Adams M.D."/>
            <person name="Celniker S.E."/>
            <person name="Holt R.A."/>
            <person name="Evans C.A."/>
            <person name="Gocayne J.D."/>
            <person name="Amanatides P.G."/>
            <person name="Scherer S.E."/>
            <person name="Li P.W."/>
            <person name="Hoskins R.A."/>
            <person name="Galle R.F."/>
            <person name="George R.A."/>
            <person name="Lewis S.E."/>
            <person name="Richards S."/>
            <person name="Ashburner M."/>
            <person name="Henderson S.N."/>
            <person name="Sutton G.G."/>
            <person name="Wortman J.R."/>
            <person name="Yandell M.D."/>
            <person name="Zhang Q."/>
            <person name="Chen L.X."/>
            <person name="Brandon R.C."/>
            <person name="Rogers Y.-H.C."/>
            <person name="Blazej R.G."/>
            <person name="Champe M."/>
            <person name="Pfeiffer B.D."/>
            <person name="Wan K.H."/>
            <person name="Doyle C."/>
            <person name="Baxter E.G."/>
            <person name="Helt G."/>
            <person name="Nelson C.R."/>
            <person name="Miklos G.L.G."/>
            <person name="Abril J.F."/>
            <person name="Agbayani A."/>
            <person name="An H.-J."/>
            <person name="Andrews-Pfannkoch C."/>
            <person name="Baldwin D."/>
            <person name="Ballew R.M."/>
            <person name="Basu A."/>
            <person name="Baxendale J."/>
            <person name="Bayraktaroglu L."/>
            <person name="Beasley E.M."/>
            <person name="Beeson K.Y."/>
            <person name="Benos P.V."/>
            <person name="Berman B.P."/>
            <person name="Bhandari D."/>
            <person name="Bolshakov S."/>
            <person name="Borkova D."/>
            <person name="Botchan M.R."/>
            <person name="Bouck J."/>
            <person name="Brokstein P."/>
            <person name="Brottier P."/>
            <person name="Burtis K.C."/>
            <person name="Busam D.A."/>
            <person name="Butler H."/>
            <person name="Cadieu E."/>
            <person name="Center A."/>
            <person name="Chandra I."/>
            <person name="Cherry J.M."/>
            <person name="Cawley S."/>
            <person name="Dahlke C."/>
            <person name="Davenport L.B."/>
            <person name="Davies P."/>
            <person name="de Pablos B."/>
            <person name="Delcher A."/>
            <person name="Deng Z."/>
            <person name="Mays A.D."/>
            <person name="Dew I."/>
            <person name="Dietz S.M."/>
            <person name="Dodson K."/>
            <person name="Doup L.E."/>
            <person name="Downes M."/>
            <person name="Dugan-Rocha S."/>
            <person name="Dunkov B.C."/>
            <person name="Dunn P."/>
            <person name="Durbin K.J."/>
            <person name="Evangelista C.C."/>
            <person name="Ferraz C."/>
            <person name="Ferriera S."/>
            <person name="Fleischmann W."/>
            <person name="Fosler C."/>
            <person name="Gabrielian A.E."/>
            <person name="Garg N.S."/>
            <person name="Gelbart W.M."/>
            <person name="Glasser K."/>
            <person name="Glodek A."/>
            <person name="Gong F."/>
            <person name="Gorrell J.H."/>
            <person name="Gu Z."/>
            <person name="Guan P."/>
            <person name="Harris M."/>
            <person name="Harris N.L."/>
            <person name="Harvey D.A."/>
            <person name="Heiman T.J."/>
            <person name="Hernandez J.R."/>
            <person name="Houck J."/>
            <person name="Hostin D."/>
            <person name="Houston K.A."/>
            <person name="Howland T.J."/>
            <person name="Wei M.-H."/>
            <person name="Ibegwam C."/>
            <person name="Jalali M."/>
            <person name="Kalush F."/>
            <person name="Karpen G.H."/>
            <person name="Ke Z."/>
            <person name="Kennison J.A."/>
            <person name="Ketchum K.A."/>
            <person name="Kimmel B.E."/>
            <person name="Kodira C.D."/>
            <person name="Kraft C.L."/>
            <person name="Kravitz S."/>
            <person name="Kulp D."/>
            <person name="Lai Z."/>
            <person name="Lasko P."/>
            <person name="Lei Y."/>
            <person name="Levitsky A.A."/>
            <person name="Li J.H."/>
            <person name="Li Z."/>
            <person name="Liang Y."/>
            <person name="Lin X."/>
            <person name="Liu X."/>
            <person name="Mattei B."/>
            <person name="McIntosh T.C."/>
            <person name="McLeod M.P."/>
            <person name="McPherson D."/>
            <person name="Merkulov G."/>
            <person name="Milshina N.V."/>
            <person name="Mobarry C."/>
            <person name="Morris J."/>
            <person name="Moshrefi A."/>
            <person name="Mount S.M."/>
            <person name="Moy M."/>
            <person name="Murphy B."/>
            <person name="Murphy L."/>
            <person name="Muzny D.M."/>
            <person name="Nelson D.L."/>
            <person name="Nelson D.R."/>
            <person name="Nelson K.A."/>
            <person name="Nixon K."/>
            <person name="Nusskern D.R."/>
            <person name="Pacleb J.M."/>
            <person name="Palazzolo M."/>
            <person name="Pittman G.S."/>
            <person name="Pan S."/>
            <person name="Pollard J."/>
            <person name="Puri V."/>
            <person name="Reese M.G."/>
            <person name="Reinert K."/>
            <person name="Remington K."/>
            <person name="Saunders R.D.C."/>
            <person name="Scheeler F."/>
            <person name="Shen H."/>
            <person name="Shue B.C."/>
            <person name="Siden-Kiamos I."/>
            <person name="Simpson M."/>
            <person name="Skupski M.P."/>
            <person name="Smith T.J."/>
            <person name="Spier E."/>
            <person name="Spradling A.C."/>
            <person name="Stapleton M."/>
            <person name="Strong R."/>
            <person name="Sun E."/>
            <person name="Svirskas R."/>
            <person name="Tector C."/>
            <person name="Turner R."/>
            <person name="Venter E."/>
            <person name="Wang A.H."/>
            <person name="Wang X."/>
            <person name="Wang Z.-Y."/>
            <person name="Wassarman D.A."/>
            <person name="Weinstock G.M."/>
            <person name="Weissenbach J."/>
            <person name="Williams S.M."/>
            <person name="Woodage T."/>
            <person name="Worley K.C."/>
            <person name="Wu D."/>
            <person name="Yang S."/>
            <person name="Yao Q.A."/>
            <person name="Ye J."/>
            <person name="Yeh R.-F."/>
            <person name="Zaveri J.S."/>
            <person name="Zhan M."/>
            <person name="Zhang G."/>
            <person name="Zhao Q."/>
            <person name="Zheng L."/>
            <person name="Zheng X.H."/>
            <person name="Zhong F.N."/>
            <person name="Zhong W."/>
            <person name="Zhou X."/>
            <person name="Zhu S.C."/>
            <person name="Zhu X."/>
            <person name="Smith H.O."/>
            <person name="Gibbs R.A."/>
            <person name="Myers E.W."/>
            <person name="Rubin G.M."/>
            <person name="Venter J.C."/>
        </authorList>
    </citation>
    <scope>NUCLEOTIDE SEQUENCE [LARGE SCALE GENOMIC DNA]</scope>
    <source>
        <strain>Berkeley</strain>
    </source>
</reference>
<reference key="3">
    <citation type="journal article" date="2002" name="Genome Biol.">
        <title>Annotation of the Drosophila melanogaster euchromatic genome: a systematic review.</title>
        <authorList>
            <person name="Misra S."/>
            <person name="Crosby M.A."/>
            <person name="Mungall C.J."/>
            <person name="Matthews B.B."/>
            <person name="Campbell K.S."/>
            <person name="Hradecky P."/>
            <person name="Huang Y."/>
            <person name="Kaminker J.S."/>
            <person name="Millburn G.H."/>
            <person name="Prochnik S.E."/>
            <person name="Smith C.D."/>
            <person name="Tupy J.L."/>
            <person name="Whitfield E.J."/>
            <person name="Bayraktaroglu L."/>
            <person name="Berman B.P."/>
            <person name="Bettencourt B.R."/>
            <person name="Celniker S.E."/>
            <person name="de Grey A.D.N.J."/>
            <person name="Drysdale R.A."/>
            <person name="Harris N.L."/>
            <person name="Richter J."/>
            <person name="Russo S."/>
            <person name="Schroeder A.J."/>
            <person name="Shu S.Q."/>
            <person name="Stapleton M."/>
            <person name="Yamada C."/>
            <person name="Ashburner M."/>
            <person name="Gelbart W.M."/>
            <person name="Rubin G.M."/>
            <person name="Lewis S.E."/>
        </authorList>
    </citation>
    <scope>GENOME REANNOTATION</scope>
    <source>
        <strain>Berkeley</strain>
    </source>
</reference>
<reference key="4">
    <citation type="journal article" date="2002" name="Genome Biol.">
        <title>A Drosophila full-length cDNA resource.</title>
        <authorList>
            <person name="Stapleton M."/>
            <person name="Carlson J.W."/>
            <person name="Brokstein P."/>
            <person name="Yu C."/>
            <person name="Champe M."/>
            <person name="George R.A."/>
            <person name="Guarin H."/>
            <person name="Kronmiller B."/>
            <person name="Pacleb J.M."/>
            <person name="Park S."/>
            <person name="Wan K.H."/>
            <person name="Rubin G.M."/>
            <person name="Celniker S.E."/>
        </authorList>
    </citation>
    <scope>NUCLEOTIDE SEQUENCE [LARGE SCALE MRNA]</scope>
    <source>
        <strain>Berkeley</strain>
        <tissue>Embryo</tissue>
    </source>
</reference>
<reference key="5">
    <citation type="submission" date="2004-05" db="EMBL/GenBank/DDBJ databases">
        <authorList>
            <person name="Stapleton M."/>
            <person name="Carlson J.W."/>
            <person name="Chavez C."/>
            <person name="Frise E."/>
            <person name="George R.A."/>
            <person name="Pacleb J.M."/>
            <person name="Park S."/>
            <person name="Wan K.H."/>
            <person name="Yu C."/>
            <person name="Rubin G.M."/>
            <person name="Celniker S.E."/>
        </authorList>
    </citation>
    <scope>NUCLEOTIDE SEQUENCE [LARGE SCALE MRNA]</scope>
    <source>
        <strain>Berkeley</strain>
        <tissue>Testis</tissue>
    </source>
</reference>
<reference key="6">
    <citation type="journal article" date="2008" name="J. Proteome Res.">
        <title>Phosphoproteome analysis of Drosophila melanogaster embryos.</title>
        <authorList>
            <person name="Zhai B."/>
            <person name="Villen J."/>
            <person name="Beausoleil S.A."/>
            <person name="Mintseris J."/>
            <person name="Gygi S.P."/>
        </authorList>
    </citation>
    <scope>PHOSPHORYLATION [LARGE SCALE ANALYSIS] AT SER-248</scope>
    <scope>IDENTIFICATION BY MASS SPECTROMETRY</scope>
    <source>
        <tissue>Embryo</tissue>
    </source>
</reference>
<reference key="7">
    <citation type="journal article" date="2011" name="Cell">
        <title>A conserved F box regulatory complex controls proteasome activity in Drosophila.</title>
        <authorList>
            <person name="Bader M."/>
            <person name="Benjamin S."/>
            <person name="Wapinski O.L."/>
            <person name="Smith D.M."/>
            <person name="Goldberg A.L."/>
            <person name="Steller H."/>
        </authorList>
    </citation>
    <scope>INTERACTION WITH NTC</scope>
</reference>